<sequence length="671" mass="76442">MITGIISILCYLQCFGTLSASVTAKNENGNFVLKNKNVELVFANGKEFLFKEFRMDGMNILPVDGSTTHPWQLIYRGPNGENPTLMPRWGEYKGGEIQKTQDASTLIFTWQMVIDAGPTCPVRILVTLGKDAELPEWRIEAEMPEGWVITESEFPRIAVNRPEGAKGILPVGFGTEYTIGNEGQLQSRYPSCTGTMQLVLMHHKGGTVYFAAQDKGGSGKVFRMKSEGKSLVFIQNVTTSYAWTQNKKFCIPWETVMGFTQKGWQDAAVQWYRPFTFETLWGAKTISERPIAEWIKNADMWLRPGEVNAETMEAVRKAMKYYGKGVGLHWYYWHNHRFDTKYPEYFPEKAGFKEMIKETQELGGFITPYINGRLWDPATDSYKTLNGKDASCRKADGTLYTEVYSSKVLNTVTCPASYIWRDVLKGVNKQILTELKTNGVYMDQIGCANSEPCYATNHGHAPGGGDWWPFAYRSLLTEMRTNLYKENQAMTTEENAECYIDLFDMMLVVNSPHNSYTKMVPLFPLIYSDRCIYSGYTYIPWRITDGSLNFMSMRSLLWGSQLGWVEPSLLMRPDAKREAKFLKNLTDFRRQQHDLFLGGRFIQEIIPTGDNPTQEIPNYEITSVVLAAEWASVSGEHVYLIVNMSEQEHKVTLPNKKQITVKALDAIRISK</sequence>
<comment type="similarity">
    <text evidence="2">Belongs to the glycoside hydrolase-like 3 (GHL3) family.</text>
</comment>
<feature type="signal peptide" evidence="1">
    <location>
        <begin position="1"/>
        <end position="24"/>
    </location>
</feature>
<feature type="chain" id="PRO_0000408872" description="Putative glycoside hydrolase BT_3595">
    <location>
        <begin position="25"/>
        <end position="671"/>
    </location>
</feature>
<dbReference type="EC" id="3.2.1.-"/>
<dbReference type="EMBL" id="AE015928">
    <property type="protein sequence ID" value="AAO78700.1"/>
    <property type="molecule type" value="Genomic_DNA"/>
</dbReference>
<dbReference type="RefSeq" id="NP_812506.1">
    <property type="nucleotide sequence ID" value="NC_004663.1"/>
</dbReference>
<dbReference type="STRING" id="226186.BT_3595"/>
<dbReference type="PaxDb" id="226186-BT_3595"/>
<dbReference type="EnsemblBacteria" id="AAO78700">
    <property type="protein sequence ID" value="AAO78700"/>
    <property type="gene ID" value="BT_3595"/>
</dbReference>
<dbReference type="KEGG" id="bth:BT_3595"/>
<dbReference type="PATRIC" id="fig|226186.12.peg.3654"/>
<dbReference type="eggNOG" id="ENOG502ZBHC">
    <property type="taxonomic scope" value="Bacteria"/>
</dbReference>
<dbReference type="HOGENOM" id="CLU_404748_0_0_10"/>
<dbReference type="InParanoid" id="Q8A1R4"/>
<dbReference type="OrthoDB" id="1097392at2"/>
<dbReference type="Proteomes" id="UP000001414">
    <property type="component" value="Chromosome"/>
</dbReference>
<dbReference type="GO" id="GO:0016798">
    <property type="term" value="F:hydrolase activity, acting on glycosyl bonds"/>
    <property type="evidence" value="ECO:0007669"/>
    <property type="project" value="UniProtKB-KW"/>
</dbReference>
<dbReference type="InterPro" id="IPR046226">
    <property type="entry name" value="DUF6259"/>
</dbReference>
<dbReference type="Pfam" id="PF19773">
    <property type="entry name" value="DUF6259"/>
    <property type="match status" value="1"/>
</dbReference>
<evidence type="ECO:0000255" key="1"/>
<evidence type="ECO:0000305" key="2"/>
<proteinExistence type="inferred from homology"/>
<reference key="1">
    <citation type="journal article" date="2003" name="Science">
        <title>A genomic view of the human-Bacteroides thetaiotaomicron symbiosis.</title>
        <authorList>
            <person name="Xu J."/>
            <person name="Bjursell M.K."/>
            <person name="Himrod J."/>
            <person name="Deng S."/>
            <person name="Carmichael L.K."/>
            <person name="Chiang H.C."/>
            <person name="Hooper L.V."/>
            <person name="Gordon J.I."/>
        </authorList>
    </citation>
    <scope>NUCLEOTIDE SEQUENCE [LARGE SCALE GENOMIC DNA]</scope>
    <source>
        <strain>ATCC 29148 / DSM 2079 / JCM 5827 / CCUG 10774 / NCTC 10582 / VPI-5482 / E50</strain>
    </source>
</reference>
<reference key="2">
    <citation type="journal article" date="2010" name="J. Bioinform. Comput. Biol.">
        <title>GH101 family of glycoside hydrolases: subfamily structure and evolutionary connections with other families.</title>
        <authorList>
            <person name="Naumoff D.G."/>
        </authorList>
    </citation>
    <scope>PUTATIVE FUNCTION</scope>
    <scope>FAMILY ASSIGNMENT</scope>
</reference>
<organism>
    <name type="scientific">Bacteroides thetaiotaomicron (strain ATCC 29148 / DSM 2079 / JCM 5827 / CCUG 10774 / NCTC 10582 / VPI-5482 / E50)</name>
    <dbReference type="NCBI Taxonomy" id="226186"/>
    <lineage>
        <taxon>Bacteria</taxon>
        <taxon>Pseudomonadati</taxon>
        <taxon>Bacteroidota</taxon>
        <taxon>Bacteroidia</taxon>
        <taxon>Bacteroidales</taxon>
        <taxon>Bacteroidaceae</taxon>
        <taxon>Bacteroides</taxon>
    </lineage>
</organism>
<protein>
    <recommendedName>
        <fullName>Putative glycoside hydrolase BT_3595</fullName>
        <ecNumber>3.2.1.-</ecNumber>
    </recommendedName>
</protein>
<gene>
    <name type="ordered locus">BT_3595</name>
</gene>
<name>GHL3_BACTN</name>
<keyword id="KW-0326">Glycosidase</keyword>
<keyword id="KW-0378">Hydrolase</keyword>
<keyword id="KW-1185">Reference proteome</keyword>
<keyword id="KW-0732">Signal</keyword>
<accession>Q8A1R4</accession>